<keyword id="KW-0067">ATP-binding</keyword>
<keyword id="KW-0093">Biotin biosynthesis</keyword>
<keyword id="KW-0963">Cytoplasm</keyword>
<keyword id="KW-0436">Ligase</keyword>
<keyword id="KW-0460">Magnesium</keyword>
<keyword id="KW-0479">Metal-binding</keyword>
<keyword id="KW-0547">Nucleotide-binding</keyword>
<comment type="function">
    <text evidence="1">Catalyzes a mechanistically unusual reaction, the ATP-dependent insertion of CO2 between the N7 and N8 nitrogen atoms of 7,8-diaminopelargonic acid (DAPA, also called 7,8-diammoniononanoate) to form a ureido ring.</text>
</comment>
<comment type="catalytic activity">
    <reaction evidence="1">
        <text>(7R,8S)-7,8-diammoniononanoate + CO2 + ATP = (4R,5S)-dethiobiotin + ADP + phosphate + 3 H(+)</text>
        <dbReference type="Rhea" id="RHEA:15805"/>
        <dbReference type="ChEBI" id="CHEBI:15378"/>
        <dbReference type="ChEBI" id="CHEBI:16526"/>
        <dbReference type="ChEBI" id="CHEBI:30616"/>
        <dbReference type="ChEBI" id="CHEBI:43474"/>
        <dbReference type="ChEBI" id="CHEBI:149469"/>
        <dbReference type="ChEBI" id="CHEBI:149473"/>
        <dbReference type="ChEBI" id="CHEBI:456216"/>
        <dbReference type="EC" id="6.3.3.3"/>
    </reaction>
</comment>
<comment type="cofactor">
    <cofactor evidence="1">
        <name>Mg(2+)</name>
        <dbReference type="ChEBI" id="CHEBI:18420"/>
    </cofactor>
</comment>
<comment type="pathway">
    <text evidence="1">Cofactor biosynthesis; biotin biosynthesis; biotin from 7,8-diaminononanoate: step 1/2.</text>
</comment>
<comment type="subunit">
    <text evidence="1">Homodimer.</text>
</comment>
<comment type="subcellular location">
    <subcellularLocation>
        <location evidence="1">Cytoplasm</location>
    </subcellularLocation>
</comment>
<comment type="similarity">
    <text evidence="1">Belongs to the dethiobiotin synthetase family.</text>
</comment>
<feature type="chain" id="PRO_0000302513" description="ATP-dependent dethiobiotin synthetase BioD">
    <location>
        <begin position="1"/>
        <end position="207"/>
    </location>
</feature>
<feature type="active site" evidence="1">
    <location>
        <position position="33"/>
    </location>
</feature>
<feature type="binding site" evidence="1">
    <location>
        <begin position="13"/>
        <end position="18"/>
    </location>
    <ligand>
        <name>ATP</name>
        <dbReference type="ChEBI" id="CHEBI:30616"/>
    </ligand>
</feature>
<feature type="binding site" evidence="1">
    <location>
        <position position="17"/>
    </location>
    <ligand>
        <name>Mg(2+)</name>
        <dbReference type="ChEBI" id="CHEBI:18420"/>
    </ligand>
</feature>
<feature type="binding site" evidence="1">
    <location>
        <position position="44"/>
    </location>
    <ligand>
        <name>ATP</name>
        <dbReference type="ChEBI" id="CHEBI:30616"/>
    </ligand>
</feature>
<feature type="binding site" evidence="1">
    <location>
        <position position="44"/>
    </location>
    <ligand>
        <name>Mg(2+)</name>
        <dbReference type="ChEBI" id="CHEBI:18420"/>
    </ligand>
</feature>
<feature type="binding site" evidence="1">
    <location>
        <begin position="100"/>
        <end position="103"/>
    </location>
    <ligand>
        <name>ATP</name>
        <dbReference type="ChEBI" id="CHEBI:30616"/>
    </ligand>
</feature>
<feature type="binding site" evidence="1">
    <location>
        <position position="100"/>
    </location>
    <ligand>
        <name>Mg(2+)</name>
        <dbReference type="ChEBI" id="CHEBI:18420"/>
    </ligand>
</feature>
<organism>
    <name type="scientific">Christiangramia forsetii (strain DSM 17595 / CGMCC 1.15422 / KT0803)</name>
    <name type="common">Gramella forsetii</name>
    <dbReference type="NCBI Taxonomy" id="411154"/>
    <lineage>
        <taxon>Bacteria</taxon>
        <taxon>Pseudomonadati</taxon>
        <taxon>Bacteroidota</taxon>
        <taxon>Flavobacteriia</taxon>
        <taxon>Flavobacteriales</taxon>
        <taxon>Flavobacteriaceae</taxon>
        <taxon>Christiangramia</taxon>
    </lineage>
</organism>
<name>BIOD_CHRFK</name>
<dbReference type="EC" id="6.3.3.3" evidence="1"/>
<dbReference type="EMBL" id="CU207366">
    <property type="protein sequence ID" value="CAL68500.1"/>
    <property type="molecule type" value="Genomic_DNA"/>
</dbReference>
<dbReference type="RefSeq" id="WP_011711401.1">
    <property type="nucleotide sequence ID" value="NC_008571.1"/>
</dbReference>
<dbReference type="SMR" id="A0M7A5"/>
<dbReference type="STRING" id="411154.GFO_3562"/>
<dbReference type="KEGG" id="gfo:GFO_3562"/>
<dbReference type="eggNOG" id="COG0132">
    <property type="taxonomic scope" value="Bacteria"/>
</dbReference>
<dbReference type="HOGENOM" id="CLU_072551_2_0_10"/>
<dbReference type="OrthoDB" id="9802097at2"/>
<dbReference type="UniPathway" id="UPA00078">
    <property type="reaction ID" value="UER00161"/>
</dbReference>
<dbReference type="Proteomes" id="UP000000755">
    <property type="component" value="Chromosome"/>
</dbReference>
<dbReference type="GO" id="GO:0005829">
    <property type="term" value="C:cytosol"/>
    <property type="evidence" value="ECO:0007669"/>
    <property type="project" value="TreeGrafter"/>
</dbReference>
<dbReference type="GO" id="GO:0005524">
    <property type="term" value="F:ATP binding"/>
    <property type="evidence" value="ECO:0007669"/>
    <property type="project" value="UniProtKB-UniRule"/>
</dbReference>
<dbReference type="GO" id="GO:0004141">
    <property type="term" value="F:dethiobiotin synthase activity"/>
    <property type="evidence" value="ECO:0007669"/>
    <property type="project" value="UniProtKB-UniRule"/>
</dbReference>
<dbReference type="GO" id="GO:0000287">
    <property type="term" value="F:magnesium ion binding"/>
    <property type="evidence" value="ECO:0007669"/>
    <property type="project" value="UniProtKB-UniRule"/>
</dbReference>
<dbReference type="GO" id="GO:0009102">
    <property type="term" value="P:biotin biosynthetic process"/>
    <property type="evidence" value="ECO:0007669"/>
    <property type="project" value="UniProtKB-UniRule"/>
</dbReference>
<dbReference type="CDD" id="cd03109">
    <property type="entry name" value="DTBS"/>
    <property type="match status" value="1"/>
</dbReference>
<dbReference type="Gene3D" id="3.40.50.300">
    <property type="entry name" value="P-loop containing nucleotide triphosphate hydrolases"/>
    <property type="match status" value="1"/>
</dbReference>
<dbReference type="HAMAP" id="MF_00336">
    <property type="entry name" value="BioD"/>
    <property type="match status" value="1"/>
</dbReference>
<dbReference type="InterPro" id="IPR004472">
    <property type="entry name" value="DTB_synth_BioD"/>
</dbReference>
<dbReference type="InterPro" id="IPR027417">
    <property type="entry name" value="P-loop_NTPase"/>
</dbReference>
<dbReference type="NCBIfam" id="TIGR00347">
    <property type="entry name" value="bioD"/>
    <property type="match status" value="1"/>
</dbReference>
<dbReference type="PANTHER" id="PTHR43210">
    <property type="entry name" value="DETHIOBIOTIN SYNTHETASE"/>
    <property type="match status" value="1"/>
</dbReference>
<dbReference type="PANTHER" id="PTHR43210:SF5">
    <property type="entry name" value="DETHIOBIOTIN SYNTHETASE"/>
    <property type="match status" value="1"/>
</dbReference>
<dbReference type="Pfam" id="PF13500">
    <property type="entry name" value="AAA_26"/>
    <property type="match status" value="1"/>
</dbReference>
<dbReference type="PIRSF" id="PIRSF006755">
    <property type="entry name" value="DTB_synth"/>
    <property type="match status" value="1"/>
</dbReference>
<dbReference type="SUPFAM" id="SSF52540">
    <property type="entry name" value="P-loop containing nucleoside triphosphate hydrolases"/>
    <property type="match status" value="1"/>
</dbReference>
<protein>
    <recommendedName>
        <fullName evidence="1">ATP-dependent dethiobiotin synthetase BioD</fullName>
        <ecNumber evidence="1">6.3.3.3</ecNumber>
    </recommendedName>
    <alternativeName>
        <fullName evidence="1">DTB synthetase</fullName>
        <shortName evidence="1">DTBS</shortName>
    </alternativeName>
    <alternativeName>
        <fullName evidence="1">Dethiobiotin synthase</fullName>
    </alternativeName>
</protein>
<gene>
    <name evidence="1" type="primary">bioD</name>
    <name type="ordered locus">GFO_3562</name>
</gene>
<sequence>MPKSYFITGIGTEVGKTVVSAIVAEALKADYWKPIQAGDLENSDSHKVKKLVSNKDSVFFKNACALNTPMSPHAAAEIDGIKLQIKNIKRPETEKDLVIEGAGGLMVPLNAKEVIADLISKEDLVILVSRHYLGSINHTLLSIEALKSRGIDKIGIIFSGDEHPTTEAAIKKLGKVKVVGRIEEEPYFDEMVVKEYAEKFRKRLCEI</sequence>
<proteinExistence type="inferred from homology"/>
<accession>A0M7A5</accession>
<evidence type="ECO:0000255" key="1">
    <source>
        <dbReference type="HAMAP-Rule" id="MF_00336"/>
    </source>
</evidence>
<reference key="1">
    <citation type="journal article" date="2006" name="Environ. Microbiol.">
        <title>Whole genome analysis of the marine Bacteroidetes'Gramella forsetii' reveals adaptations to degradation of polymeric organic matter.</title>
        <authorList>
            <person name="Bauer M."/>
            <person name="Kube M."/>
            <person name="Teeling H."/>
            <person name="Richter M."/>
            <person name="Lombardot T."/>
            <person name="Allers E."/>
            <person name="Wuerdemann C.A."/>
            <person name="Quast C."/>
            <person name="Kuhl H."/>
            <person name="Knaust F."/>
            <person name="Woebken D."/>
            <person name="Bischof K."/>
            <person name="Mussmann M."/>
            <person name="Choudhuri J.V."/>
            <person name="Meyer F."/>
            <person name="Reinhardt R."/>
            <person name="Amann R.I."/>
            <person name="Gloeckner F.O."/>
        </authorList>
    </citation>
    <scope>NUCLEOTIDE SEQUENCE [LARGE SCALE GENOMIC DNA]</scope>
    <source>
        <strain>DSM 17595 / CGMCC 1.15422 / KT0803</strain>
    </source>
</reference>